<feature type="chain" id="PRO_0000154142" description="Aminodeoxychorismate synthase">
    <location>
        <begin position="1"/>
        <end position="787"/>
    </location>
</feature>
<feature type="domain" description="Glutamine amidotransferase type-1" evidence="1">
    <location>
        <begin position="16"/>
        <end position="233"/>
    </location>
</feature>
<feature type="region of interest" description="PABB component">
    <location>
        <begin position="304"/>
        <end position="787"/>
    </location>
</feature>
<feature type="active site" evidence="1">
    <location>
        <position position="112"/>
    </location>
</feature>
<feature type="active site" evidence="1">
    <location>
        <position position="207"/>
    </location>
</feature>
<feature type="active site" evidence="1">
    <location>
        <position position="209"/>
    </location>
</feature>
<feature type="sequence conflict" description="In Ref. 5; AAT93048." evidence="6" ref="5">
    <original>G</original>
    <variation>D</variation>
    <location>
        <position position="85"/>
    </location>
</feature>
<feature type="sequence conflict" description="In Ref. 1; AAA34840 and 2; AAB49319." evidence="6" ref="1 2">
    <original>A</original>
    <variation>P</variation>
    <location>
        <position position="171"/>
    </location>
</feature>
<feature type="sequence conflict" description="In Ref. 1; AAA34840." evidence="6" ref="1">
    <original>A</original>
    <variation>T</variation>
    <location>
        <position position="533"/>
    </location>
</feature>
<feature type="sequence conflict" description="In Ref. 2; AAB49319." evidence="6" ref="2">
    <original>D</original>
    <variation>Y</variation>
    <location>
        <position position="586"/>
    </location>
</feature>
<feature type="sequence conflict" description="In Ref. 1; AAA34840." evidence="6" ref="1">
    <original>CE</original>
    <variation>FV</variation>
    <location>
        <begin position="590"/>
        <end position="591"/>
    </location>
</feature>
<feature type="sequence conflict" description="In Ref. 2; AAB49319." evidence="6" ref="2">
    <original>G</original>
    <variation>GL</variation>
    <location>
        <position position="721"/>
    </location>
</feature>
<feature type="sequence conflict" description="In Ref. 1; AAA34840." evidence="6" ref="1">
    <original>V</original>
    <variation>G</variation>
    <location>
        <position position="722"/>
    </location>
</feature>
<feature type="sequence conflict" description="In Ref. 1; AAA34840." evidence="6" ref="1">
    <original>NGD</original>
    <variation>FGF</variation>
    <location>
        <begin position="735"/>
        <end position="737"/>
    </location>
</feature>
<gene>
    <name type="primary">ABZ1</name>
    <name type="ordered locus">YNR033W</name>
    <name type="ORF">N3286</name>
</gene>
<sequence length="787" mass="88544">MLSDTIDTKQQQQQLHVLFIDSYDSFTYNVVRLIEQQTDISPGVNAVHVTTVHSDTFQSMDQLLPLLPLFDAIVVGPGPGNPNNGAQDMGIISELFENANGKLDEVPILGICLGFQAMCLAQGADVSELNTIKHGQVYEMHLNDAARACGLFSGYPDTFKSTRYHSLHVNAEGIDTLLPLCTTEDENGILLMSAQTKNKPWFGVQYHPESCCSELGGLLVSNFLKLSFINNVKTGRWEKKKLNGEFSDILSRLDRTIDRDPIYKVKEKYPKGEDTTYVKQFEVSEDPKLTFEICNIIREEKFVMSSSVISENTGEWSIIALPNSASQVFTHYGAMKKTTVHYWQDSEISYTLLKKCLDGQDSDLPGSLEVIHEDKSQFWITLGKFMENKIIDNHREIPFIGGLVGILGYEIGQYIACGRCNDDENSLVPDAKLVFINNSIVINHKQGKLYCISLDNTFPVALEQSLRDSFVRKKNIKQSLSWPKYLPEEIDFIITMPDKLDYAKAFKKCQDYMHKGDSYEMCLTTQTKVVPSAVIEPWRIFQTLVQRNPAPFSSFFEFKDIIPRQDETPPVLCFLSTSPERFLKWDADTCELRPIKGTVKKGPQMNLAKATRILKTPKEFGENLMILDLIRNDLYELVPDVRVEEFMSVQEYATVYQLVSVVKAHGLTSASKKTRYSGIDVLKHSLPPGSMTGAPKKITVQLLQDKIESKLNKHVNGGARGVYSGVTGYWSVNSNGDWSVNIRCMYSYNGGTSWQLGAGGAITVLSTLDGELEEMYNKLESNLQIFM</sequence>
<comment type="function">
    <text evidence="4">Catalyzes the biosynthesis of 4-amino-4-deoxychorismate (ADC) from chorismate and glutamine. Required for the synthesis of 4-aminobenzoate (PABA), an important component in tetrahydrofolate biosynthesis.</text>
</comment>
<comment type="catalytic activity">
    <reaction evidence="7">
        <text>chorismate + L-glutamine = 4-amino-4-deoxychorismate + L-glutamate</text>
        <dbReference type="Rhea" id="RHEA:11672"/>
        <dbReference type="ChEBI" id="CHEBI:29748"/>
        <dbReference type="ChEBI" id="CHEBI:29985"/>
        <dbReference type="ChEBI" id="CHEBI:58359"/>
        <dbReference type="ChEBI" id="CHEBI:58406"/>
        <dbReference type="EC" id="2.6.1.85"/>
    </reaction>
</comment>
<comment type="pathway">
    <text evidence="4">Cofactor biosynthesis; tetrahydrofolate biosynthesis; 4-aminobenzoate from chorismate: step 1/2.</text>
</comment>
<comment type="subcellular location">
    <subcellularLocation>
        <location evidence="2">Cytoplasm</location>
    </subcellularLocation>
</comment>
<comment type="domain">
    <text evidence="7">The PABA component provides the glutamine amidotransferase activity.</text>
</comment>
<comment type="domain">
    <text evidence="7">The PABB component catalyzes the formation of ADC by binding chorismate and ammonia.</text>
</comment>
<comment type="miscellaneous">
    <text evidence="3">Present with 1550 molecules/cell in log phase SD medium.</text>
</comment>
<comment type="similarity">
    <text evidence="6">In the C-terminal section; belongs to the anthranilate synthase component I family.</text>
</comment>
<comment type="sequence caution" evidence="6">
    <conflict type="frameshift">
        <sequence resource="EMBL-CDS" id="AAA34840"/>
    </conflict>
</comment>
<comment type="sequence caution" evidence="6">
    <conflict type="frameshift">
        <sequence resource="EMBL-CDS" id="AAB49319"/>
    </conflict>
</comment>
<dbReference type="EC" id="2.6.1.85" evidence="4"/>
<dbReference type="EMBL" id="L15299">
    <property type="protein sequence ID" value="AAA34840.1"/>
    <property type="status" value="ALT_FRAME"/>
    <property type="molecule type" value="Genomic_DNA"/>
</dbReference>
<dbReference type="EMBL" id="U43608">
    <property type="protein sequence ID" value="AAB49319.1"/>
    <property type="status" value="ALT_FRAME"/>
    <property type="molecule type" value="Genomic_DNA"/>
</dbReference>
<dbReference type="EMBL" id="Z71648">
    <property type="protein sequence ID" value="CAA96313.1"/>
    <property type="molecule type" value="Genomic_DNA"/>
</dbReference>
<dbReference type="EMBL" id="AY693029">
    <property type="protein sequence ID" value="AAT93048.1"/>
    <property type="molecule type" value="Genomic_DNA"/>
</dbReference>
<dbReference type="EMBL" id="BK006947">
    <property type="protein sequence ID" value="DAA10574.1"/>
    <property type="molecule type" value="Genomic_DNA"/>
</dbReference>
<dbReference type="PIR" id="S63364">
    <property type="entry name" value="S63364"/>
</dbReference>
<dbReference type="RefSeq" id="NP_014431.1">
    <property type="nucleotide sequence ID" value="NM_001183210.1"/>
</dbReference>
<dbReference type="SMR" id="P37254"/>
<dbReference type="BioGRID" id="35858">
    <property type="interactions" value="79"/>
</dbReference>
<dbReference type="DIP" id="DIP-6278N"/>
<dbReference type="FunCoup" id="P37254">
    <property type="interactions" value="244"/>
</dbReference>
<dbReference type="IntAct" id="P37254">
    <property type="interactions" value="9"/>
</dbReference>
<dbReference type="MINT" id="P37254"/>
<dbReference type="STRING" id="4932.YNR033W"/>
<dbReference type="MEROPS" id="C26.958"/>
<dbReference type="iPTMnet" id="P37254"/>
<dbReference type="PaxDb" id="4932-YNR033W"/>
<dbReference type="PeptideAtlas" id="P37254"/>
<dbReference type="EnsemblFungi" id="YNR033W_mRNA">
    <property type="protein sequence ID" value="YNR033W"/>
    <property type="gene ID" value="YNR033W"/>
</dbReference>
<dbReference type="GeneID" id="855768"/>
<dbReference type="KEGG" id="sce:YNR033W"/>
<dbReference type="AGR" id="SGD:S000005316"/>
<dbReference type="SGD" id="S000005316">
    <property type="gene designation" value="ABZ1"/>
</dbReference>
<dbReference type="VEuPathDB" id="FungiDB:YNR033W"/>
<dbReference type="eggNOG" id="KOG1224">
    <property type="taxonomic scope" value="Eukaryota"/>
</dbReference>
<dbReference type="HOGENOM" id="CLU_006493_0_0_1"/>
<dbReference type="InParanoid" id="P37254"/>
<dbReference type="OMA" id="DWSVNIR"/>
<dbReference type="OrthoDB" id="64220at2759"/>
<dbReference type="BioCyc" id="YEAST:YNR033W-MONOMER"/>
<dbReference type="UniPathway" id="UPA00077">
    <property type="reaction ID" value="UER00149"/>
</dbReference>
<dbReference type="BioGRID-ORCS" id="855768">
    <property type="hits" value="2 hits in 10 CRISPR screens"/>
</dbReference>
<dbReference type="PRO" id="PR:P37254"/>
<dbReference type="Proteomes" id="UP000002311">
    <property type="component" value="Chromosome XIV"/>
</dbReference>
<dbReference type="RNAct" id="P37254">
    <property type="molecule type" value="protein"/>
</dbReference>
<dbReference type="GO" id="GO:0005737">
    <property type="term" value="C:cytoplasm"/>
    <property type="evidence" value="ECO:0007005"/>
    <property type="project" value="SGD"/>
</dbReference>
<dbReference type="GO" id="GO:0046820">
    <property type="term" value="F:4-amino-4-deoxychorismate synthase activity"/>
    <property type="evidence" value="ECO:0000315"/>
    <property type="project" value="SGD"/>
</dbReference>
<dbReference type="GO" id="GO:0008153">
    <property type="term" value="P:4-aminobenzoate biosynthetic process"/>
    <property type="evidence" value="ECO:0000315"/>
    <property type="project" value="SGD"/>
</dbReference>
<dbReference type="GO" id="GO:0046656">
    <property type="term" value="P:folic acid biosynthetic process"/>
    <property type="evidence" value="ECO:0007669"/>
    <property type="project" value="UniProtKB-KW"/>
</dbReference>
<dbReference type="GO" id="GO:0046654">
    <property type="term" value="P:tetrahydrofolate biosynthetic process"/>
    <property type="evidence" value="ECO:0007669"/>
    <property type="project" value="UniProtKB-UniPathway"/>
</dbReference>
<dbReference type="CDD" id="cd01743">
    <property type="entry name" value="GATase1_Anthranilate_Synthase"/>
    <property type="match status" value="1"/>
</dbReference>
<dbReference type="FunFam" id="3.40.50.880:FF:000091">
    <property type="entry name" value="Aminodeoxychorismate synthase"/>
    <property type="match status" value="1"/>
</dbReference>
<dbReference type="Gene3D" id="3.40.50.880">
    <property type="match status" value="1"/>
</dbReference>
<dbReference type="Gene3D" id="3.60.120.10">
    <property type="entry name" value="Anthranilate synthase"/>
    <property type="match status" value="1"/>
</dbReference>
<dbReference type="InterPro" id="IPR005801">
    <property type="entry name" value="ADC_synthase"/>
</dbReference>
<dbReference type="InterPro" id="IPR019999">
    <property type="entry name" value="Anth_synth_I-like"/>
</dbReference>
<dbReference type="InterPro" id="IPR006805">
    <property type="entry name" value="Anth_synth_I_N"/>
</dbReference>
<dbReference type="InterPro" id="IPR015890">
    <property type="entry name" value="Chorismate_C"/>
</dbReference>
<dbReference type="InterPro" id="IPR029062">
    <property type="entry name" value="Class_I_gatase-like"/>
</dbReference>
<dbReference type="InterPro" id="IPR017926">
    <property type="entry name" value="GATASE"/>
</dbReference>
<dbReference type="InterPro" id="IPR010117">
    <property type="entry name" value="PabB_fungal"/>
</dbReference>
<dbReference type="InterPro" id="IPR006221">
    <property type="entry name" value="TrpG/PapA_dom"/>
</dbReference>
<dbReference type="NCBIfam" id="TIGR01823">
    <property type="entry name" value="PabB-fungal"/>
    <property type="match status" value="1"/>
</dbReference>
<dbReference type="NCBIfam" id="TIGR00566">
    <property type="entry name" value="trpG_papA"/>
    <property type="match status" value="1"/>
</dbReference>
<dbReference type="PANTHER" id="PTHR11236">
    <property type="entry name" value="AMINOBENZOATE/ANTHRANILATE SYNTHASE"/>
    <property type="match status" value="1"/>
</dbReference>
<dbReference type="PANTHER" id="PTHR11236:SF18">
    <property type="entry name" value="AMINODEOXYCHORISMATE SYNTHASE"/>
    <property type="match status" value="1"/>
</dbReference>
<dbReference type="Pfam" id="PF04715">
    <property type="entry name" value="Anth_synt_I_N"/>
    <property type="match status" value="1"/>
</dbReference>
<dbReference type="Pfam" id="PF00425">
    <property type="entry name" value="Chorismate_bind"/>
    <property type="match status" value="1"/>
</dbReference>
<dbReference type="Pfam" id="PF00117">
    <property type="entry name" value="GATase"/>
    <property type="match status" value="1"/>
</dbReference>
<dbReference type="PRINTS" id="PR00097">
    <property type="entry name" value="ANTSNTHASEII"/>
</dbReference>
<dbReference type="PRINTS" id="PR00096">
    <property type="entry name" value="GATASE"/>
</dbReference>
<dbReference type="SUPFAM" id="SSF56322">
    <property type="entry name" value="ADC synthase"/>
    <property type="match status" value="1"/>
</dbReference>
<dbReference type="SUPFAM" id="SSF52317">
    <property type="entry name" value="Class I glutamine amidotransferase-like"/>
    <property type="match status" value="1"/>
</dbReference>
<dbReference type="PROSITE" id="PS51273">
    <property type="entry name" value="GATASE_TYPE_1"/>
    <property type="match status" value="1"/>
</dbReference>
<evidence type="ECO:0000255" key="1">
    <source>
        <dbReference type="PROSITE-ProRule" id="PRU00605"/>
    </source>
</evidence>
<evidence type="ECO:0000269" key="2">
    <source>
    </source>
</evidence>
<evidence type="ECO:0000269" key="3">
    <source>
    </source>
</evidence>
<evidence type="ECO:0000269" key="4">
    <source>
    </source>
</evidence>
<evidence type="ECO:0000303" key="5">
    <source>
    </source>
</evidence>
<evidence type="ECO:0000305" key="6"/>
<evidence type="ECO:0000305" key="7">
    <source>
    </source>
</evidence>
<accession>P37254</accession>
<accession>D6W1K8</accession>
<accession>Q02982</accession>
<accession>Q6B1Q1</accession>
<keyword id="KW-0963">Cytoplasm</keyword>
<keyword id="KW-0289">Folate biosynthesis</keyword>
<keyword id="KW-0315">Glutamine amidotransferase</keyword>
<keyword id="KW-0511">Multifunctional enzyme</keyword>
<keyword id="KW-1185">Reference proteome</keyword>
<keyword id="KW-0808">Transferase</keyword>
<reference key="1">
    <citation type="journal article" date="1993" name="Yeast">
        <title>Para-aminobenzoate synthase gene of Saccharomyces cerevisiae encodes a bifunctional enzyme.</title>
        <authorList>
            <person name="Edman J.C."/>
            <person name="Goldstein A.L."/>
            <person name="Erbe J.G."/>
        </authorList>
    </citation>
    <scope>NUCLEOTIDE SEQUENCE [GENOMIC DNA]</scope>
    <scope>FUNCTION</scope>
    <scope>DOMAIN</scope>
</reference>
<reference key="2">
    <citation type="journal article" date="1996" name="Genetics">
        <title>Los1p, involved in yeast pre-tRNA splicing, positively regulates members of the SOL gene family.</title>
        <authorList>
            <person name="Shen W.-C."/>
            <person name="Stanford D.R."/>
            <person name="Hopper A.K."/>
        </authorList>
    </citation>
    <scope>NUCLEOTIDE SEQUENCE [GENOMIC DNA]</scope>
</reference>
<reference key="3">
    <citation type="journal article" date="1997" name="Nature">
        <title>The nucleotide sequence of Saccharomyces cerevisiae chromosome XIV and its evolutionary implications.</title>
        <authorList>
            <person name="Philippsen P."/>
            <person name="Kleine K."/>
            <person name="Poehlmann R."/>
            <person name="Duesterhoeft A."/>
            <person name="Hamberg K."/>
            <person name="Hegemann J.H."/>
            <person name="Obermaier B."/>
            <person name="Urrestarazu L.A."/>
            <person name="Aert R."/>
            <person name="Albermann K."/>
            <person name="Altmann R."/>
            <person name="Andre B."/>
            <person name="Baladron V."/>
            <person name="Ballesta J.P.G."/>
            <person name="Becam A.-M."/>
            <person name="Beinhauer J.D."/>
            <person name="Boskovic J."/>
            <person name="Buitrago M.J."/>
            <person name="Bussereau F."/>
            <person name="Coster F."/>
            <person name="Crouzet M."/>
            <person name="D'Angelo M."/>
            <person name="Dal Pero F."/>
            <person name="De Antoni A."/>
            <person name="del Rey F."/>
            <person name="Doignon F."/>
            <person name="Domdey H."/>
            <person name="Dubois E."/>
            <person name="Fiedler T.A."/>
            <person name="Fleig U."/>
            <person name="Floeth M."/>
            <person name="Fritz C."/>
            <person name="Gaillardin C."/>
            <person name="Garcia-Cantalejo J.M."/>
            <person name="Glansdorff N."/>
            <person name="Goffeau A."/>
            <person name="Gueldener U."/>
            <person name="Herbert C.J."/>
            <person name="Heumann K."/>
            <person name="Heuss-Neitzel D."/>
            <person name="Hilbert H."/>
            <person name="Hinni K."/>
            <person name="Iraqui Houssaini I."/>
            <person name="Jacquet M."/>
            <person name="Jimenez A."/>
            <person name="Jonniaux J.-L."/>
            <person name="Karpfinger-Hartl L."/>
            <person name="Lanfranchi G."/>
            <person name="Lepingle A."/>
            <person name="Levesque H."/>
            <person name="Lyck R."/>
            <person name="Maftahi M."/>
            <person name="Mallet L."/>
            <person name="Maurer C.T.C."/>
            <person name="Messenguy F."/>
            <person name="Mewes H.-W."/>
            <person name="Moestl D."/>
            <person name="Nasr F."/>
            <person name="Nicaud J.-M."/>
            <person name="Niedenthal R.K."/>
            <person name="Pandolfo D."/>
            <person name="Pierard A."/>
            <person name="Piravandi E."/>
            <person name="Planta R.J."/>
            <person name="Pohl T.M."/>
            <person name="Purnelle B."/>
            <person name="Rebischung C."/>
            <person name="Remacha M.A."/>
            <person name="Revuelta J.L."/>
            <person name="Rinke M."/>
            <person name="Saiz J.E."/>
            <person name="Sartorello F."/>
            <person name="Scherens B."/>
            <person name="Sen-Gupta M."/>
            <person name="Soler-Mira A."/>
            <person name="Urbanus J.H.M."/>
            <person name="Valle G."/>
            <person name="Van Dyck L."/>
            <person name="Verhasselt P."/>
            <person name="Vierendeels F."/>
            <person name="Vissers S."/>
            <person name="Voet M."/>
            <person name="Volckaert G."/>
            <person name="Wach A."/>
            <person name="Wambutt R."/>
            <person name="Wedler H."/>
            <person name="Zollner A."/>
            <person name="Hani J."/>
        </authorList>
    </citation>
    <scope>NUCLEOTIDE SEQUENCE [LARGE SCALE GENOMIC DNA]</scope>
    <source>
        <strain>ATCC 204508 / S288c</strain>
    </source>
</reference>
<reference key="4">
    <citation type="journal article" date="2014" name="G3 (Bethesda)">
        <title>The reference genome sequence of Saccharomyces cerevisiae: Then and now.</title>
        <authorList>
            <person name="Engel S.R."/>
            <person name="Dietrich F.S."/>
            <person name="Fisk D.G."/>
            <person name="Binkley G."/>
            <person name="Balakrishnan R."/>
            <person name="Costanzo M.C."/>
            <person name="Dwight S.S."/>
            <person name="Hitz B.C."/>
            <person name="Karra K."/>
            <person name="Nash R.S."/>
            <person name="Weng S."/>
            <person name="Wong E.D."/>
            <person name="Lloyd P."/>
            <person name="Skrzypek M.S."/>
            <person name="Miyasato S.R."/>
            <person name="Simison M."/>
            <person name="Cherry J.M."/>
        </authorList>
    </citation>
    <scope>GENOME REANNOTATION</scope>
    <source>
        <strain>ATCC 204508 / S288c</strain>
    </source>
</reference>
<reference key="5">
    <citation type="journal article" date="2007" name="Genome Res.">
        <title>Approaching a complete repository of sequence-verified protein-encoding clones for Saccharomyces cerevisiae.</title>
        <authorList>
            <person name="Hu Y."/>
            <person name="Rolfs A."/>
            <person name="Bhullar B."/>
            <person name="Murthy T.V.S."/>
            <person name="Zhu C."/>
            <person name="Berger M.F."/>
            <person name="Camargo A.A."/>
            <person name="Kelley F."/>
            <person name="McCarron S."/>
            <person name="Jepson D."/>
            <person name="Richardson A."/>
            <person name="Raphael J."/>
            <person name="Moreira D."/>
            <person name="Taycher E."/>
            <person name="Zuo D."/>
            <person name="Mohr S."/>
            <person name="Kane M.F."/>
            <person name="Williamson J."/>
            <person name="Simpson A.J.G."/>
            <person name="Bulyk M.L."/>
            <person name="Harlow E."/>
            <person name="Marsischky G."/>
            <person name="Kolodner R.D."/>
            <person name="LaBaer J."/>
        </authorList>
    </citation>
    <scope>NUCLEOTIDE SEQUENCE [GENOMIC DNA]</scope>
    <source>
        <strain>ATCC 204508 / S288c</strain>
    </source>
</reference>
<reference key="6">
    <citation type="journal article" date="2003" name="Nature">
        <title>Global analysis of protein localization in budding yeast.</title>
        <authorList>
            <person name="Huh W.-K."/>
            <person name="Falvo J.V."/>
            <person name="Gerke L.C."/>
            <person name="Carroll A.S."/>
            <person name="Howson R.W."/>
            <person name="Weissman J.S."/>
            <person name="O'Shea E.K."/>
        </authorList>
    </citation>
    <scope>SUBCELLULAR LOCATION [LARGE SCALE ANALYSIS]</scope>
</reference>
<reference key="7">
    <citation type="journal article" date="2003" name="Nature">
        <title>Global analysis of protein expression in yeast.</title>
        <authorList>
            <person name="Ghaemmaghami S."/>
            <person name="Huh W.-K."/>
            <person name="Bower K."/>
            <person name="Howson R.W."/>
            <person name="Belle A."/>
            <person name="Dephoure N."/>
            <person name="O'Shea E.K."/>
            <person name="Weissman J.S."/>
        </authorList>
    </citation>
    <scope>LEVEL OF PROTEIN EXPRESSION [LARGE SCALE ANALYSIS]</scope>
</reference>
<name>ADCS_YEAST</name>
<protein>
    <recommendedName>
        <fullName evidence="6">Aminodeoxychorismate synthase</fullName>
        <shortName evidence="6">ADC synthase</shortName>
        <ecNumber evidence="4">2.6.1.85</ecNumber>
    </recommendedName>
    <alternativeName>
        <fullName evidence="5">P-aminobenzoic acid synthase</fullName>
        <shortName evidence="5">PABA synthase</shortName>
    </alternativeName>
    <alternativeName>
        <fullName>Para-aminobenzoate synthase</fullName>
    </alternativeName>
</protein>
<organism>
    <name type="scientific">Saccharomyces cerevisiae (strain ATCC 204508 / S288c)</name>
    <name type="common">Baker's yeast</name>
    <dbReference type="NCBI Taxonomy" id="559292"/>
    <lineage>
        <taxon>Eukaryota</taxon>
        <taxon>Fungi</taxon>
        <taxon>Dikarya</taxon>
        <taxon>Ascomycota</taxon>
        <taxon>Saccharomycotina</taxon>
        <taxon>Saccharomycetes</taxon>
        <taxon>Saccharomycetales</taxon>
        <taxon>Saccharomycetaceae</taxon>
        <taxon>Saccharomyces</taxon>
    </lineage>
</organism>
<proteinExistence type="evidence at protein level"/>